<comment type="function">
    <text evidence="1">Forms an efflux pump with AaeB.</text>
</comment>
<comment type="subcellular location">
    <subcellularLocation>
        <location evidence="1">Cell inner membrane</location>
        <topology evidence="1">Single-pass membrane protein</topology>
    </subcellularLocation>
</comment>
<comment type="similarity">
    <text evidence="1">Belongs to the membrane fusion protein (MFP) (TC 8.A.1) family.</text>
</comment>
<keyword id="KW-0997">Cell inner membrane</keyword>
<keyword id="KW-1003">Cell membrane</keyword>
<keyword id="KW-0472">Membrane</keyword>
<keyword id="KW-0812">Transmembrane</keyword>
<keyword id="KW-1133">Transmembrane helix</keyword>
<keyword id="KW-0813">Transport</keyword>
<feature type="chain" id="PRO_0000201853" description="p-hydroxybenzoic acid efflux pump subunit AaeA">
    <location>
        <begin position="1"/>
        <end position="310"/>
    </location>
</feature>
<feature type="transmembrane region" description="Helical" evidence="1">
    <location>
        <begin position="12"/>
        <end position="32"/>
    </location>
</feature>
<reference key="1">
    <citation type="journal article" date="2005" name="Nucleic Acids Res.">
        <title>The genome sequence of Salmonella enterica serovar Choleraesuis, a highly invasive and resistant zoonotic pathogen.</title>
        <authorList>
            <person name="Chiu C.-H."/>
            <person name="Tang P."/>
            <person name="Chu C."/>
            <person name="Hu S."/>
            <person name="Bao Q."/>
            <person name="Yu J."/>
            <person name="Chou Y.-Y."/>
            <person name="Wang H.-S."/>
            <person name="Lee Y.-S."/>
        </authorList>
    </citation>
    <scope>NUCLEOTIDE SEQUENCE [LARGE SCALE GENOMIC DNA]</scope>
    <source>
        <strain>SC-B67</strain>
    </source>
</reference>
<proteinExistence type="inferred from homology"/>
<organism>
    <name type="scientific">Salmonella choleraesuis (strain SC-B67)</name>
    <dbReference type="NCBI Taxonomy" id="321314"/>
    <lineage>
        <taxon>Bacteria</taxon>
        <taxon>Pseudomonadati</taxon>
        <taxon>Pseudomonadota</taxon>
        <taxon>Gammaproteobacteria</taxon>
        <taxon>Enterobacterales</taxon>
        <taxon>Enterobacteriaceae</taxon>
        <taxon>Salmonella</taxon>
    </lineage>
</organism>
<accession>Q57JA3</accession>
<evidence type="ECO:0000255" key="1">
    <source>
        <dbReference type="HAMAP-Rule" id="MF_01544"/>
    </source>
</evidence>
<sequence length="310" mass="34545">MKTLTRKLSRTAITLVLVILAFIAIFRAWVYYTESPWTRDARFSADVVAIAPDVAGLITHVNVHDNQLVKKDQVLFTIDQPRYQKALAEAEADVAYYQVLAQEKRQEAGRRNRLGVQAMSREEIDQANNVLQTVLHQLAKAQATRDLAKLDLERTVIRAPADGWVTNLNVYAGEFITRGSTAVALVKKNSFYVQAYMEETKLEGVRPGYRAEITPLGSNRVLKGTVDSVAAGVTNASSTSDAKGMATIDSNLEWVRLAQRVPVRIRLDEQQGNLWPAGTTATVVITGKQDRDASQDSFFRKLAHRLREFG</sequence>
<gene>
    <name evidence="1" type="primary">aaeA</name>
    <name type="ordered locus">SCH_3303</name>
</gene>
<protein>
    <recommendedName>
        <fullName evidence="1">p-hydroxybenzoic acid efflux pump subunit AaeA</fullName>
        <shortName evidence="1">pHBA efflux pump protein A</shortName>
    </recommendedName>
</protein>
<name>AAEA_SALCH</name>
<dbReference type="EMBL" id="AE017220">
    <property type="protein sequence ID" value="AAX67209.1"/>
    <property type="molecule type" value="Genomic_DNA"/>
</dbReference>
<dbReference type="RefSeq" id="WP_000855134.1">
    <property type="nucleotide sequence ID" value="NC_006905.1"/>
</dbReference>
<dbReference type="SMR" id="Q57JA3"/>
<dbReference type="KEGG" id="sec:SCH_3303"/>
<dbReference type="HOGENOM" id="CLU_018816_15_2_6"/>
<dbReference type="Proteomes" id="UP000000538">
    <property type="component" value="Chromosome"/>
</dbReference>
<dbReference type="GO" id="GO:0005886">
    <property type="term" value="C:plasma membrane"/>
    <property type="evidence" value="ECO:0007669"/>
    <property type="project" value="UniProtKB-SubCell"/>
</dbReference>
<dbReference type="GO" id="GO:0022857">
    <property type="term" value="F:transmembrane transporter activity"/>
    <property type="evidence" value="ECO:0007669"/>
    <property type="project" value="UniProtKB-UniRule"/>
</dbReference>
<dbReference type="FunFam" id="2.40.30.170:FF:000002">
    <property type="entry name" value="p-hydroxybenzoic acid efflux pump subunit AaeA"/>
    <property type="match status" value="1"/>
</dbReference>
<dbReference type="FunFam" id="2.40.50.100:FF:000018">
    <property type="entry name" value="p-hydroxybenzoic acid efflux pump subunit AaeA"/>
    <property type="match status" value="1"/>
</dbReference>
<dbReference type="Gene3D" id="2.40.30.170">
    <property type="match status" value="1"/>
</dbReference>
<dbReference type="Gene3D" id="2.40.50.100">
    <property type="match status" value="1"/>
</dbReference>
<dbReference type="HAMAP" id="MF_01544">
    <property type="entry name" value="AaeA"/>
    <property type="match status" value="1"/>
</dbReference>
<dbReference type="InterPro" id="IPR043602">
    <property type="entry name" value="CusB-like_dom_1"/>
</dbReference>
<dbReference type="InterPro" id="IPR032317">
    <property type="entry name" value="CusB_D23"/>
</dbReference>
<dbReference type="InterPro" id="IPR050393">
    <property type="entry name" value="MFP_Efflux_Pump"/>
</dbReference>
<dbReference type="InterPro" id="IPR022871">
    <property type="entry name" value="PHBA_efflux_pump_AaeA"/>
</dbReference>
<dbReference type="InterPro" id="IPR006143">
    <property type="entry name" value="RND_pump_MFP"/>
</dbReference>
<dbReference type="NCBIfam" id="NF007850">
    <property type="entry name" value="PRK10559.1"/>
    <property type="match status" value="1"/>
</dbReference>
<dbReference type="NCBIfam" id="TIGR01730">
    <property type="entry name" value="RND_mfp"/>
    <property type="match status" value="1"/>
</dbReference>
<dbReference type="PANTHER" id="PTHR30367:SF12">
    <property type="entry name" value="P-HYDROXYBENZOIC ACID EFFLUX PUMP SUBUNIT AAEA"/>
    <property type="match status" value="1"/>
</dbReference>
<dbReference type="PANTHER" id="PTHR30367">
    <property type="entry name" value="P-HYDROXYBENZOIC ACID EFFLUX PUMP SUBUNIT AAEA-RELATED"/>
    <property type="match status" value="1"/>
</dbReference>
<dbReference type="Pfam" id="PF00529">
    <property type="entry name" value="CusB_dom_1"/>
    <property type="match status" value="1"/>
</dbReference>
<dbReference type="Pfam" id="PF16576">
    <property type="entry name" value="HlyD_D23"/>
    <property type="match status" value="1"/>
</dbReference>
<dbReference type="SUPFAM" id="SSF111369">
    <property type="entry name" value="HlyD-like secretion proteins"/>
    <property type="match status" value="1"/>
</dbReference>